<organism evidence="5 6">
    <name type="scientific">Campylobacter jejuni subsp. jejuni serotype O:2 (strain ATCC 700819 / NCTC 11168)</name>
    <dbReference type="NCBI Taxonomy" id="192222"/>
    <lineage>
        <taxon>Bacteria</taxon>
        <taxon>Pseudomonadati</taxon>
        <taxon>Campylobacterota</taxon>
        <taxon>Epsilonproteobacteria</taxon>
        <taxon>Campylobacterales</taxon>
        <taxon>Campylobacteraceae</taxon>
        <taxon>Campylobacter</taxon>
    </lineage>
</organism>
<gene>
    <name evidence="5" type="ordered locus">Cj1427c</name>
</gene>
<dbReference type="EC" id="1.1.98.-" evidence="1"/>
<dbReference type="EMBL" id="AL111168">
    <property type="protein sequence ID" value="CAL35536.1"/>
    <property type="molecule type" value="Genomic_DNA"/>
</dbReference>
<dbReference type="PIR" id="C81288">
    <property type="entry name" value="C81288"/>
</dbReference>
<dbReference type="RefSeq" id="WP_002858299.1">
    <property type="nucleotide sequence ID" value="NZ_SZUC01000003.1"/>
</dbReference>
<dbReference type="RefSeq" id="YP_002344810.1">
    <property type="nucleotide sequence ID" value="NC_002163.1"/>
</dbReference>
<dbReference type="PDB" id="6VO6">
    <property type="method" value="X-ray"/>
    <property type="resolution" value="1.50 A"/>
    <property type="chains" value="A/B/C/D=1-313"/>
</dbReference>
<dbReference type="PDB" id="6VO8">
    <property type="method" value="X-ray"/>
    <property type="resolution" value="2.40 A"/>
    <property type="chains" value="A/B=1-313"/>
</dbReference>
<dbReference type="PDBsum" id="6VO6"/>
<dbReference type="PDBsum" id="6VO8"/>
<dbReference type="SMR" id="Q0P8I7"/>
<dbReference type="IntAct" id="Q0P8I7">
    <property type="interactions" value="5"/>
</dbReference>
<dbReference type="STRING" id="192222.Cj1427c"/>
<dbReference type="PaxDb" id="192222-Cj1427c"/>
<dbReference type="EnsemblBacteria" id="CAL35536">
    <property type="protein sequence ID" value="CAL35536"/>
    <property type="gene ID" value="Cj1427c"/>
</dbReference>
<dbReference type="GeneID" id="905716"/>
<dbReference type="KEGG" id="cje:Cj1427c"/>
<dbReference type="PATRIC" id="fig|192222.6.peg.1408"/>
<dbReference type="eggNOG" id="COG0451">
    <property type="taxonomic scope" value="Bacteria"/>
</dbReference>
<dbReference type="HOGENOM" id="CLU_007383_4_0_7"/>
<dbReference type="OrthoDB" id="9795501at2"/>
<dbReference type="BioCyc" id="MetaCyc:MONOMER-19062"/>
<dbReference type="STRENDA-DB" id="FAODQX">
    <property type="experiment" value="Characterization of Cj1427"/>
</dbReference>
<dbReference type="UniPathway" id="UPA00934"/>
<dbReference type="Proteomes" id="UP000000799">
    <property type="component" value="Chromosome"/>
</dbReference>
<dbReference type="GO" id="GO:0019003">
    <property type="term" value="F:GDP binding"/>
    <property type="evidence" value="ECO:0000314"/>
    <property type="project" value="UniProtKB"/>
</dbReference>
<dbReference type="GO" id="GO:0042802">
    <property type="term" value="F:identical protein binding"/>
    <property type="evidence" value="ECO:0000314"/>
    <property type="project" value="UniProtKB"/>
</dbReference>
<dbReference type="GO" id="GO:0070404">
    <property type="term" value="F:NADH binding"/>
    <property type="evidence" value="ECO:0000314"/>
    <property type="project" value="UniProtKB"/>
</dbReference>
<dbReference type="GO" id="GO:0016491">
    <property type="term" value="F:oxidoreductase activity"/>
    <property type="evidence" value="ECO:0007669"/>
    <property type="project" value="UniProtKB-KW"/>
</dbReference>
<dbReference type="GO" id="GO:0003978">
    <property type="term" value="F:UDP-glucose 4-epimerase activity"/>
    <property type="evidence" value="ECO:0007669"/>
    <property type="project" value="UniProtKB-EC"/>
</dbReference>
<dbReference type="GO" id="GO:0045227">
    <property type="term" value="P:capsule polysaccharide biosynthetic process"/>
    <property type="evidence" value="ECO:0000314"/>
    <property type="project" value="UniProtKB"/>
</dbReference>
<dbReference type="GO" id="GO:0051289">
    <property type="term" value="P:protein homotetramerization"/>
    <property type="evidence" value="ECO:0000314"/>
    <property type="project" value="UniProtKB"/>
</dbReference>
<dbReference type="CDD" id="cd08946">
    <property type="entry name" value="SDR_e"/>
    <property type="match status" value="1"/>
</dbReference>
<dbReference type="Gene3D" id="3.40.50.720">
    <property type="entry name" value="NAD(P)-binding Rossmann-like Domain"/>
    <property type="match status" value="1"/>
</dbReference>
<dbReference type="InterPro" id="IPR001509">
    <property type="entry name" value="Epimerase_deHydtase"/>
</dbReference>
<dbReference type="InterPro" id="IPR050177">
    <property type="entry name" value="Lipid_A_modif_metabolic_enz"/>
</dbReference>
<dbReference type="InterPro" id="IPR036291">
    <property type="entry name" value="NAD(P)-bd_dom_sf"/>
</dbReference>
<dbReference type="PANTHER" id="PTHR43245">
    <property type="entry name" value="BIFUNCTIONAL POLYMYXIN RESISTANCE PROTEIN ARNA"/>
    <property type="match status" value="1"/>
</dbReference>
<dbReference type="PANTHER" id="PTHR43245:SF23">
    <property type="entry name" value="NAD(P)-BINDING DOMAIN-CONTAINING PROTEIN"/>
    <property type="match status" value="1"/>
</dbReference>
<dbReference type="Pfam" id="PF01370">
    <property type="entry name" value="Epimerase"/>
    <property type="match status" value="1"/>
</dbReference>
<dbReference type="SUPFAM" id="SSF51735">
    <property type="entry name" value="NAD(P)-binding Rossmann-fold domains"/>
    <property type="match status" value="1"/>
</dbReference>
<feature type="chain" id="PRO_0000455378" description="GDP-D-glycero-alpha-D-manno-heptose dehydrogenase">
    <location>
        <begin position="1"/>
        <end position="313"/>
    </location>
</feature>
<feature type="binding site" evidence="2 7">
    <location>
        <begin position="13"/>
        <end position="14"/>
    </location>
    <ligand>
        <name>NADH</name>
        <dbReference type="ChEBI" id="CHEBI:57945"/>
    </ligand>
</feature>
<feature type="binding site" evidence="2 7">
    <location>
        <begin position="33"/>
        <end position="39"/>
    </location>
    <ligand>
        <name>NADH</name>
        <dbReference type="ChEBI" id="CHEBI:57945"/>
    </ligand>
</feature>
<feature type="binding site" evidence="2 7">
    <location>
        <position position="37"/>
    </location>
    <ligand>
        <name>NADH</name>
        <dbReference type="ChEBI" id="CHEBI:57945"/>
    </ligand>
</feature>
<feature type="binding site" evidence="2 7">
    <location>
        <begin position="57"/>
        <end position="58"/>
    </location>
    <ligand>
        <name>NADH</name>
        <dbReference type="ChEBI" id="CHEBI:57945"/>
    </ligand>
</feature>
<feature type="binding site" evidence="2 7">
    <location>
        <position position="77"/>
    </location>
    <ligand>
        <name>NADH</name>
        <dbReference type="ChEBI" id="CHEBI:57945"/>
    </ligand>
</feature>
<feature type="binding site" evidence="2 7">
    <location>
        <begin position="144"/>
        <end position="148"/>
    </location>
    <ligand>
        <name>NADH</name>
        <dbReference type="ChEBI" id="CHEBI:57945"/>
    </ligand>
</feature>
<feature type="binding site" evidence="2 7">
    <location>
        <position position="168"/>
    </location>
    <ligand>
        <name>GDP</name>
        <dbReference type="ChEBI" id="CHEBI:58189"/>
    </ligand>
</feature>
<feature type="binding site" evidence="2 7">
    <location>
        <position position="169"/>
    </location>
    <ligand>
        <name>NADH</name>
        <dbReference type="ChEBI" id="CHEBI:57945"/>
    </ligand>
</feature>
<feature type="binding site" evidence="2 7">
    <location>
        <begin position="175"/>
        <end position="177"/>
    </location>
    <ligand>
        <name>NADH</name>
        <dbReference type="ChEBI" id="CHEBI:57945"/>
    </ligand>
</feature>
<feature type="binding site" evidence="2 7">
    <location>
        <begin position="179"/>
        <end position="184"/>
    </location>
    <ligand>
        <name>GDP</name>
        <dbReference type="ChEBI" id="CHEBI:58189"/>
    </ligand>
</feature>
<feature type="binding site" evidence="2 7">
    <location>
        <begin position="196"/>
        <end position="198"/>
    </location>
    <ligand>
        <name>GDP</name>
        <dbReference type="ChEBI" id="CHEBI:58189"/>
    </ligand>
</feature>
<feature type="binding site" evidence="2 7">
    <location>
        <position position="204"/>
    </location>
    <ligand>
        <name>GDP</name>
        <dbReference type="ChEBI" id="CHEBI:58189"/>
    </ligand>
</feature>
<feature type="binding site" evidence="2 7">
    <location>
        <position position="242"/>
    </location>
    <ligand>
        <name>GDP</name>
        <dbReference type="ChEBI" id="CHEBI:58189"/>
    </ligand>
</feature>
<feature type="binding site" evidence="2 7">
    <location>
        <position position="270"/>
    </location>
    <ligand>
        <name>GDP</name>
        <dbReference type="ChEBI" id="CHEBI:58189"/>
    </ligand>
</feature>
<feature type="binding site" evidence="2 7">
    <location>
        <position position="311"/>
    </location>
    <ligand>
        <name>NADH</name>
        <dbReference type="ChEBI" id="CHEBI:57945"/>
    </ligand>
</feature>
<feature type="strand" evidence="9">
    <location>
        <begin position="4"/>
        <end position="8"/>
    </location>
</feature>
<feature type="turn" evidence="9">
    <location>
        <begin position="9"/>
        <end position="11"/>
    </location>
</feature>
<feature type="helix" evidence="9">
    <location>
        <begin position="13"/>
        <end position="24"/>
    </location>
</feature>
<feature type="strand" evidence="9">
    <location>
        <begin position="28"/>
        <end position="33"/>
    </location>
</feature>
<feature type="helix" evidence="9">
    <location>
        <begin position="43"/>
        <end position="45"/>
    </location>
</feature>
<feature type="strand" evidence="9">
    <location>
        <begin position="51"/>
        <end position="55"/>
    </location>
</feature>
<feature type="helix" evidence="9">
    <location>
        <begin position="61"/>
        <end position="68"/>
    </location>
</feature>
<feature type="strand" evidence="9">
    <location>
        <begin position="72"/>
        <end position="76"/>
    </location>
</feature>
<feature type="helix" evidence="9">
    <location>
        <begin position="83"/>
        <end position="88"/>
    </location>
</feature>
<feature type="helix" evidence="9">
    <location>
        <begin position="90"/>
        <end position="97"/>
    </location>
</feature>
<feature type="helix" evidence="9">
    <location>
        <begin position="99"/>
        <end position="107"/>
    </location>
</feature>
<feature type="strand" evidence="9">
    <location>
        <begin position="112"/>
        <end position="119"/>
    </location>
</feature>
<feature type="turn" evidence="9">
    <location>
        <begin position="121"/>
        <end position="124"/>
    </location>
</feature>
<feature type="helix" evidence="9">
    <location>
        <begin position="143"/>
        <end position="158"/>
    </location>
</feature>
<feature type="strand" evidence="9">
    <location>
        <begin position="161"/>
        <end position="166"/>
    </location>
</feature>
<feature type="strand" evidence="9">
    <location>
        <begin position="168"/>
        <end position="171"/>
    </location>
</feature>
<feature type="strand" evidence="10">
    <location>
        <begin position="178"/>
        <end position="180"/>
    </location>
</feature>
<feature type="helix" evidence="9">
    <location>
        <begin position="181"/>
        <end position="192"/>
    </location>
</feature>
<feature type="strand" evidence="9">
    <location>
        <begin position="193"/>
        <end position="199"/>
    </location>
</feature>
<feature type="strand" evidence="9">
    <location>
        <begin position="206"/>
        <end position="208"/>
    </location>
</feature>
<feature type="helix" evidence="9">
    <location>
        <begin position="209"/>
        <end position="221"/>
    </location>
</feature>
<feature type="helix" evidence="9">
    <location>
        <begin position="223"/>
        <end position="226"/>
    </location>
</feature>
<feature type="strand" evidence="9">
    <location>
        <begin position="229"/>
        <end position="234"/>
    </location>
</feature>
<feature type="helix" evidence="9">
    <location>
        <begin position="242"/>
        <end position="252"/>
    </location>
</feature>
<feature type="strand" evidence="9">
    <location>
        <begin position="257"/>
        <end position="260"/>
    </location>
</feature>
<feature type="helix" evidence="9">
    <location>
        <begin position="277"/>
        <end position="280"/>
    </location>
</feature>
<feature type="turn" evidence="9">
    <location>
        <begin position="281"/>
        <end position="283"/>
    </location>
</feature>
<feature type="helix" evidence="9">
    <location>
        <begin position="290"/>
        <end position="301"/>
    </location>
</feature>
<feature type="strand" evidence="9">
    <location>
        <begin position="307"/>
        <end position="309"/>
    </location>
</feature>
<protein>
    <recommendedName>
        <fullName evidence="3">GDP-D-glycero-alpha-D-manno-heptose dehydrogenase</fullName>
        <ecNumber evidence="1">1.1.98.-</ecNumber>
    </recommendedName>
</protein>
<evidence type="ECO:0000269" key="1">
    <source>
    </source>
</evidence>
<evidence type="ECO:0000269" key="2">
    <source>
    </source>
</evidence>
<evidence type="ECO:0000303" key="3">
    <source>
    </source>
</evidence>
<evidence type="ECO:0000303" key="4">
    <source>
    </source>
</evidence>
<evidence type="ECO:0000312" key="5">
    <source>
        <dbReference type="EMBL" id="CAL35536.1"/>
    </source>
</evidence>
<evidence type="ECO:0000312" key="6">
    <source>
        <dbReference type="Proteomes" id="UP000000799"/>
    </source>
</evidence>
<evidence type="ECO:0007744" key="7">
    <source>
        <dbReference type="PDB" id="6VO6"/>
    </source>
</evidence>
<evidence type="ECO:0007744" key="8">
    <source>
        <dbReference type="PDB" id="6VO8"/>
    </source>
</evidence>
<evidence type="ECO:0007829" key="9">
    <source>
        <dbReference type="PDB" id="6VO6"/>
    </source>
</evidence>
<evidence type="ECO:0007829" key="10">
    <source>
        <dbReference type="PDB" id="6VO8"/>
    </source>
</evidence>
<name>GMHD_CAMJE</name>
<comment type="function">
    <text evidence="1">NAD-dependent dehydrogenase involved in the biosynthesis of heptose moieties with a hydroxyl group at C6 found on the capsular polysaccharide (CPS) of C.jejuni. Catalyzes the initial oxidation of C4 of the GDP-D-glycero-alpha-D-manno-heptose to form GDP-D-glycero-4-keto-alpha-D-lyxo-heptose in the presence of alpha-ketoglutarate required to recycle the NADH nucleotide.</text>
</comment>
<comment type="catalytic activity">
    <reaction evidence="1">
        <text>GDP-D-glycero-alpha-D-manno-heptose + 2-oxoglutarate = GDP-D-glycero-4-keto-alpha-D-lyxo-heptose + (S)-2-hydroxyglutarate</text>
        <dbReference type="Rhea" id="RHEA:70211"/>
        <dbReference type="ChEBI" id="CHEBI:16782"/>
        <dbReference type="ChEBI" id="CHEBI:16810"/>
        <dbReference type="ChEBI" id="CHEBI:59971"/>
        <dbReference type="ChEBI" id="CHEBI:189049"/>
    </reaction>
</comment>
<comment type="cofactor">
    <cofactor evidence="1 2">
        <name>NAD(+)</name>
        <dbReference type="ChEBI" id="CHEBI:57540"/>
    </cofactor>
</comment>
<comment type="biophysicochemical properties">
    <kinetics>
        <KM evidence="1">63 uM for GDP-D-glycero-alpha-D-manno-heptose (at pH 7.4 and 30 degrees Celsius)</KM>
        <KM evidence="1">130 uM for alpha-ketoglutarate (at pH 7.4 and 30 degrees Celsius)</KM>
        <text evidence="1">kcat is 0.64 sec(-1) with GDP-D-glycero-alpha-D-manno-heptose as substrate. kcat is 0.55 sec(-1) with alpha-ketoglutarate as substrate.</text>
    </kinetics>
</comment>
<comment type="pathway">
    <text evidence="1">Capsule biogenesis; capsule polysaccharide biosynthesis.</text>
</comment>
<comment type="subunit">
    <text evidence="2">Homotetramer.</text>
</comment>
<sequence>MSKKVLITGGAGYIGSVLTPILLEKGYEVCVIDNLMFDQISLLSCFHNKNFTFINGDAMDENLIRQEVAKADIIIPLAALVGAPLCKRNPKLAKMINYEAVKMISDFASPSQIFIYPNTNSGYGIGEKDAMCTEESPLRPISEYGIDKVHAEQYLLDKGNCVTFRLATVFGISPRMRLDLLVNDFTYRAYRDKFIVLFEEHFRRNYIHVRDVVKGFIHGIENYDKMKGQAYNMGLSSANLTKRQLAETIKKYIPDFYIHSANIGEDPDKRDYLVSNTKLEATGWKPDNTLEDGIKELLRAFKMMKVNRFANFN</sequence>
<reference evidence="5 6" key="1">
    <citation type="journal article" date="2000" name="Nature">
        <title>The genome sequence of the food-borne pathogen Campylobacter jejuni reveals hypervariable sequences.</title>
        <authorList>
            <person name="Parkhill J."/>
            <person name="Wren B.W."/>
            <person name="Mungall K.L."/>
            <person name="Ketley J.M."/>
            <person name="Churcher C.M."/>
            <person name="Basham D."/>
            <person name="Chillingworth T."/>
            <person name="Davies R.M."/>
            <person name="Feltwell T."/>
            <person name="Holroyd S."/>
            <person name="Jagels K."/>
            <person name="Karlyshev A.V."/>
            <person name="Moule S."/>
            <person name="Pallen M.J."/>
            <person name="Penn C.W."/>
            <person name="Quail M.A."/>
            <person name="Rajandream M.A."/>
            <person name="Rutherford K.M."/>
            <person name="van Vliet A.H.M."/>
            <person name="Whitehead S."/>
            <person name="Barrell B.G."/>
        </authorList>
    </citation>
    <scope>NUCLEOTIDE SEQUENCE [LARGE SCALE GENOMIC DNA]</scope>
    <source>
        <strain evidence="6">ATCC 700819 / NCTC 11168</strain>
    </source>
</reference>
<reference key="2">
    <citation type="journal article" date="2020" name="Biochemistry">
        <title>Functional Characterization of Cj1427, a Unique Ping-Pong Dehydrogenase Responsible for the Oxidation of GDP-d-glycero-alpha-d-manno-heptose in Campylobacter jejuni.</title>
        <authorList>
            <person name="Huddleston J.P."/>
            <person name="Raushel F.M."/>
        </authorList>
    </citation>
    <scope>FUNCTION</scope>
    <scope>CATALYTIC ACTIVITY</scope>
    <scope>COFACTOR</scope>
    <scope>BIOPHYSICOCHEMICAL PROPERTIES</scope>
    <scope>PATHWAY</scope>
    <scope>REACTION MECHANISM</scope>
    <source>
        <strain evidence="3">ATCC 700819 / NCTC 11168</strain>
    </source>
</reference>
<reference evidence="7 8" key="3">
    <citation type="journal article" date="2020" name="Biochemistry">
        <title>Structural Analysis of Cj1427, an Essential NAD-Dependent Dehydrogenase for the Biosynthesis of the Heptose Residues in the Capsular Polysaccharides of Campylobacter jejuni.</title>
        <authorList>
            <person name="Huddleston J.P."/>
            <person name="Anderson T.K."/>
            <person name="Spencer K.D."/>
            <person name="Thoden J.B."/>
            <person name="Raushel F.M."/>
            <person name="Holden H.M."/>
        </authorList>
    </citation>
    <scope>X-RAY CRYSTALLOGRAPHY (1.50 ANGSTROMS) IN COMPLEXES WITH GDP AND NADH</scope>
    <scope>COFACTOR</scope>
    <scope>SUBUNIT</scope>
    <source>
        <strain evidence="4">ATCC 700819 / NCTC 11168</strain>
    </source>
</reference>
<proteinExistence type="evidence at protein level"/>
<keyword id="KW-0002">3D-structure</keyword>
<keyword id="KW-0520">NAD</keyword>
<keyword id="KW-0560">Oxidoreductase</keyword>
<keyword id="KW-1185">Reference proteome</keyword>
<accession>Q0P8I7</accession>